<gene>
    <name evidence="3" type="primary">SPH3</name>
    <name evidence="6" type="ordered locus">At5g12060</name>
    <name evidence="7" type="ORF">MXC9.1</name>
</gene>
<protein>
    <recommendedName>
        <fullName evidence="3">S-protein homolog 3</fullName>
    </recommendedName>
</protein>
<feature type="signal peptide" evidence="1">
    <location>
        <begin position="1"/>
        <end position="23"/>
    </location>
</feature>
<feature type="chain" id="PRO_5009348368" description="S-protein homolog 3">
    <location>
        <begin position="24"/>
        <end position="150"/>
    </location>
</feature>
<feature type="glycosylation site" description="N-linked (GlcNAc...) asparagine" evidence="2">
    <location>
        <position position="32"/>
    </location>
</feature>
<feature type="glycosylation site" description="N-linked (GlcNAc...) asparagine" evidence="2">
    <location>
        <position position="70"/>
    </location>
</feature>
<evidence type="ECO:0000255" key="1"/>
<evidence type="ECO:0000255" key="2">
    <source>
        <dbReference type="PROSITE-ProRule" id="PRU00498"/>
    </source>
</evidence>
<evidence type="ECO:0000303" key="3">
    <source>
    </source>
</evidence>
<evidence type="ECO:0000305" key="4"/>
<evidence type="ECO:0000305" key="5">
    <source>
    </source>
</evidence>
<evidence type="ECO:0000312" key="6">
    <source>
        <dbReference type="Araport" id="AT5G12060"/>
    </source>
</evidence>
<evidence type="ECO:0000312" key="7">
    <source>
        <dbReference type="EMBL" id="BAB10024.1"/>
    </source>
</evidence>
<reference key="1">
    <citation type="journal article" date="1997" name="DNA Res.">
        <title>Structural analysis of Arabidopsis thaliana chromosome 5. III. Sequence features of the regions of 1,191,918 bp covered by seventeen physically assigned P1 clones.</title>
        <authorList>
            <person name="Nakamura Y."/>
            <person name="Sato S."/>
            <person name="Kaneko T."/>
            <person name="Kotani H."/>
            <person name="Asamizu E."/>
            <person name="Miyajima N."/>
            <person name="Tabata S."/>
        </authorList>
    </citation>
    <scope>NUCLEOTIDE SEQUENCE [LARGE SCALE GENOMIC DNA]</scope>
    <source>
        <strain>cv. Columbia</strain>
    </source>
</reference>
<reference key="2">
    <citation type="journal article" date="2017" name="Plant J.">
        <title>Araport11: a complete reannotation of the Arabidopsis thaliana reference genome.</title>
        <authorList>
            <person name="Cheng C.Y."/>
            <person name="Krishnakumar V."/>
            <person name="Chan A.P."/>
            <person name="Thibaud-Nissen F."/>
            <person name="Schobel S."/>
            <person name="Town C.D."/>
        </authorList>
    </citation>
    <scope>GENOME REANNOTATION</scope>
    <source>
        <strain>cv. Columbia</strain>
    </source>
</reference>
<reference key="3">
    <citation type="journal article" date="2006" name="Plant Biotechnol. J.">
        <title>Simultaneous high-throughput recombinational cloning of open reading frames in closed and open configurations.</title>
        <authorList>
            <person name="Underwood B.A."/>
            <person name="Vanderhaeghen R."/>
            <person name="Whitford R."/>
            <person name="Town C.D."/>
            <person name="Hilson P."/>
        </authorList>
    </citation>
    <scope>NUCLEOTIDE SEQUENCE [LARGE SCALE MRNA]</scope>
    <source>
        <strain>cv. Columbia</strain>
    </source>
</reference>
<reference key="4">
    <citation type="journal article" date="1999" name="Plant Mol. Biol.">
        <title>Analysis of Arabidopsis genome sequence reveals a large new gene family in plants.</title>
        <authorList>
            <person name="Ride J.P."/>
            <person name="Davies E.M."/>
            <person name="Franklin F.C.H."/>
            <person name="Marshall D.F."/>
        </authorList>
    </citation>
    <scope>GENE FAMILY</scope>
    <scope>NOMENCLATURE</scope>
    <source>
        <strain>cv. Columbia</strain>
    </source>
</reference>
<proteinExistence type="evidence at transcript level"/>
<keyword id="KW-0325">Glycoprotein</keyword>
<keyword id="KW-1185">Reference proteome</keyword>
<keyword id="KW-0964">Secreted</keyword>
<keyword id="KW-0713">Self-incompatibility</keyword>
<keyword id="KW-0732">Signal</keyword>
<sequence length="150" mass="17218">MKNILKTQVHVVVIYLLIKIAFSQVKTDFDVNWSTSKMVRITNRLGDGLTLNLHCKSADDDLGLKILAPNGSWSFKFRTSIVGTTLFYCHFTWPGQSKRFDIYDDDRDGVRSHISCINCIWDISIQGPCMFSESDHAFNICYDWNGNLRT</sequence>
<organism>
    <name type="scientific">Arabidopsis thaliana</name>
    <name type="common">Mouse-ear cress</name>
    <dbReference type="NCBI Taxonomy" id="3702"/>
    <lineage>
        <taxon>Eukaryota</taxon>
        <taxon>Viridiplantae</taxon>
        <taxon>Streptophyta</taxon>
        <taxon>Embryophyta</taxon>
        <taxon>Tracheophyta</taxon>
        <taxon>Spermatophyta</taxon>
        <taxon>Magnoliopsida</taxon>
        <taxon>eudicotyledons</taxon>
        <taxon>Gunneridae</taxon>
        <taxon>Pentapetalae</taxon>
        <taxon>rosids</taxon>
        <taxon>malvids</taxon>
        <taxon>Brassicales</taxon>
        <taxon>Brassicaceae</taxon>
        <taxon>Camelineae</taxon>
        <taxon>Arabidopsis</taxon>
    </lineage>
</organism>
<dbReference type="EMBL" id="AB007727">
    <property type="protein sequence ID" value="BAB10024.1"/>
    <property type="molecule type" value="Genomic_DNA"/>
</dbReference>
<dbReference type="EMBL" id="CP002688">
    <property type="protein sequence ID" value="AED91757.1"/>
    <property type="molecule type" value="Genomic_DNA"/>
</dbReference>
<dbReference type="EMBL" id="DQ056678">
    <property type="protein sequence ID" value="AAY78824.1"/>
    <property type="molecule type" value="mRNA"/>
</dbReference>
<dbReference type="RefSeq" id="NP_196767.1">
    <property type="nucleotide sequence ID" value="NM_121244.2"/>
</dbReference>
<dbReference type="SMR" id="Q9FMQ4"/>
<dbReference type="STRING" id="3702.Q9FMQ4"/>
<dbReference type="GlyCosmos" id="Q9FMQ4">
    <property type="glycosylation" value="2 sites, No reported glycans"/>
</dbReference>
<dbReference type="GlyGen" id="Q9FMQ4">
    <property type="glycosylation" value="2 sites"/>
</dbReference>
<dbReference type="PaxDb" id="3702-AT5G12060.1"/>
<dbReference type="ProteomicsDB" id="228393"/>
<dbReference type="EnsemblPlants" id="AT5G12060.1">
    <property type="protein sequence ID" value="AT5G12060.1"/>
    <property type="gene ID" value="AT5G12060"/>
</dbReference>
<dbReference type="GeneID" id="831079"/>
<dbReference type="Gramene" id="AT5G12060.1">
    <property type="protein sequence ID" value="AT5G12060.1"/>
    <property type="gene ID" value="AT5G12060"/>
</dbReference>
<dbReference type="KEGG" id="ath:AT5G12060"/>
<dbReference type="Araport" id="AT5G12060"/>
<dbReference type="TAIR" id="AT5G12060"/>
<dbReference type="eggNOG" id="ENOG502S7CQ">
    <property type="taxonomic scope" value="Eukaryota"/>
</dbReference>
<dbReference type="HOGENOM" id="CLU_125658_0_1_1"/>
<dbReference type="InParanoid" id="Q9FMQ4"/>
<dbReference type="OMA" id="CVYEERT"/>
<dbReference type="PhylomeDB" id="Q9FMQ4"/>
<dbReference type="PRO" id="PR:Q9FMQ4"/>
<dbReference type="Proteomes" id="UP000006548">
    <property type="component" value="Chromosome 5"/>
</dbReference>
<dbReference type="ExpressionAtlas" id="Q9FMQ4">
    <property type="expression patterns" value="baseline"/>
</dbReference>
<dbReference type="GO" id="GO:0005576">
    <property type="term" value="C:extracellular region"/>
    <property type="evidence" value="ECO:0007669"/>
    <property type="project" value="UniProtKB-SubCell"/>
</dbReference>
<dbReference type="GO" id="GO:0060320">
    <property type="term" value="P:rejection of self pollen"/>
    <property type="evidence" value="ECO:0007669"/>
    <property type="project" value="UniProtKB-KW"/>
</dbReference>
<dbReference type="InterPro" id="IPR008972">
    <property type="entry name" value="Cupredoxin"/>
</dbReference>
<dbReference type="InterPro" id="IPR010264">
    <property type="entry name" value="Self-incomp_S1"/>
</dbReference>
<dbReference type="PANTHER" id="PTHR31232">
    <property type="match status" value="1"/>
</dbReference>
<dbReference type="PANTHER" id="PTHR31232:SF43">
    <property type="entry name" value="S-PROTEIN HOMOLOG 29-RELATED"/>
    <property type="match status" value="1"/>
</dbReference>
<dbReference type="Pfam" id="PF05938">
    <property type="entry name" value="Self-incomp_S1"/>
    <property type="match status" value="1"/>
</dbReference>
<dbReference type="SUPFAM" id="SSF49503">
    <property type="entry name" value="Cupredoxins"/>
    <property type="match status" value="1"/>
</dbReference>
<comment type="subcellular location">
    <subcellularLocation>
        <location evidence="5">Secreted</location>
    </subcellularLocation>
</comment>
<comment type="similarity">
    <text evidence="4">Belongs to the plant self-incompatibility (S1) protein family.</text>
</comment>
<accession>Q9FMQ4</accession>
<name>SPH3_ARATH</name>